<reference key="1">
    <citation type="journal article" date="2004" name="Nat. Genet.">
        <title>Complete sequencing and characterization of 21,243 full-length human cDNAs.</title>
        <authorList>
            <person name="Ota T."/>
            <person name="Suzuki Y."/>
            <person name="Nishikawa T."/>
            <person name="Otsuki T."/>
            <person name="Sugiyama T."/>
            <person name="Irie R."/>
            <person name="Wakamatsu A."/>
            <person name="Hayashi K."/>
            <person name="Sato H."/>
            <person name="Nagai K."/>
            <person name="Kimura K."/>
            <person name="Makita H."/>
            <person name="Sekine M."/>
            <person name="Obayashi M."/>
            <person name="Nishi T."/>
            <person name="Shibahara T."/>
            <person name="Tanaka T."/>
            <person name="Ishii S."/>
            <person name="Yamamoto J."/>
            <person name="Saito K."/>
            <person name="Kawai Y."/>
            <person name="Isono Y."/>
            <person name="Nakamura Y."/>
            <person name="Nagahari K."/>
            <person name="Murakami K."/>
            <person name="Yasuda T."/>
            <person name="Iwayanagi T."/>
            <person name="Wagatsuma M."/>
            <person name="Shiratori A."/>
            <person name="Sudo H."/>
            <person name="Hosoiri T."/>
            <person name="Kaku Y."/>
            <person name="Kodaira H."/>
            <person name="Kondo H."/>
            <person name="Sugawara M."/>
            <person name="Takahashi M."/>
            <person name="Kanda K."/>
            <person name="Yokoi T."/>
            <person name="Furuya T."/>
            <person name="Kikkawa E."/>
            <person name="Omura Y."/>
            <person name="Abe K."/>
            <person name="Kamihara K."/>
            <person name="Katsuta N."/>
            <person name="Sato K."/>
            <person name="Tanikawa M."/>
            <person name="Yamazaki M."/>
            <person name="Ninomiya K."/>
            <person name="Ishibashi T."/>
            <person name="Yamashita H."/>
            <person name="Murakawa K."/>
            <person name="Fujimori K."/>
            <person name="Tanai H."/>
            <person name="Kimata M."/>
            <person name="Watanabe M."/>
            <person name="Hiraoka S."/>
            <person name="Chiba Y."/>
            <person name="Ishida S."/>
            <person name="Ono Y."/>
            <person name="Takiguchi S."/>
            <person name="Watanabe S."/>
            <person name="Yosida M."/>
            <person name="Hotuta T."/>
            <person name="Kusano J."/>
            <person name="Kanehori K."/>
            <person name="Takahashi-Fujii A."/>
            <person name="Hara H."/>
            <person name="Tanase T.-O."/>
            <person name="Nomura Y."/>
            <person name="Togiya S."/>
            <person name="Komai F."/>
            <person name="Hara R."/>
            <person name="Takeuchi K."/>
            <person name="Arita M."/>
            <person name="Imose N."/>
            <person name="Musashino K."/>
            <person name="Yuuki H."/>
            <person name="Oshima A."/>
            <person name="Sasaki N."/>
            <person name="Aotsuka S."/>
            <person name="Yoshikawa Y."/>
            <person name="Matsunawa H."/>
            <person name="Ichihara T."/>
            <person name="Shiohata N."/>
            <person name="Sano S."/>
            <person name="Moriya S."/>
            <person name="Momiyama H."/>
            <person name="Satoh N."/>
            <person name="Takami S."/>
            <person name="Terashima Y."/>
            <person name="Suzuki O."/>
            <person name="Nakagawa S."/>
            <person name="Senoh A."/>
            <person name="Mizoguchi H."/>
            <person name="Goto Y."/>
            <person name="Shimizu F."/>
            <person name="Wakebe H."/>
            <person name="Hishigaki H."/>
            <person name="Watanabe T."/>
            <person name="Sugiyama A."/>
            <person name="Takemoto M."/>
            <person name="Kawakami B."/>
            <person name="Yamazaki M."/>
            <person name="Watanabe K."/>
            <person name="Kumagai A."/>
            <person name="Itakura S."/>
            <person name="Fukuzumi Y."/>
            <person name="Fujimori Y."/>
            <person name="Komiyama M."/>
            <person name="Tashiro H."/>
            <person name="Tanigami A."/>
            <person name="Fujiwara T."/>
            <person name="Ono T."/>
            <person name="Yamada K."/>
            <person name="Fujii Y."/>
            <person name="Ozaki K."/>
            <person name="Hirao M."/>
            <person name="Ohmori Y."/>
            <person name="Kawabata A."/>
            <person name="Hikiji T."/>
            <person name="Kobatake N."/>
            <person name="Inagaki H."/>
            <person name="Ikema Y."/>
            <person name="Okamoto S."/>
            <person name="Okitani R."/>
            <person name="Kawakami T."/>
            <person name="Noguchi S."/>
            <person name="Itoh T."/>
            <person name="Shigeta K."/>
            <person name="Senba T."/>
            <person name="Matsumura K."/>
            <person name="Nakajima Y."/>
            <person name="Mizuno T."/>
            <person name="Morinaga M."/>
            <person name="Sasaki M."/>
            <person name="Togashi T."/>
            <person name="Oyama M."/>
            <person name="Hata H."/>
            <person name="Watanabe M."/>
            <person name="Komatsu T."/>
            <person name="Mizushima-Sugano J."/>
            <person name="Satoh T."/>
            <person name="Shirai Y."/>
            <person name="Takahashi Y."/>
            <person name="Nakagawa K."/>
            <person name="Okumura K."/>
            <person name="Nagase T."/>
            <person name="Nomura N."/>
            <person name="Kikuchi H."/>
            <person name="Masuho Y."/>
            <person name="Yamashita R."/>
            <person name="Nakai K."/>
            <person name="Yada T."/>
            <person name="Nakamura Y."/>
            <person name="Ohara O."/>
            <person name="Isogai T."/>
            <person name="Sugano S."/>
        </authorList>
    </citation>
    <scope>NUCLEOTIDE SEQUENCE [LARGE SCALE MRNA] (ISOFORMS 1 AND 3)</scope>
    <source>
        <tissue>Brain</tissue>
        <tissue>Kidney</tissue>
    </source>
</reference>
<reference key="2">
    <citation type="journal article" date="2003" name="Nature">
        <title>The DNA sequence and analysis of human chromosome 6.</title>
        <authorList>
            <person name="Mungall A.J."/>
            <person name="Palmer S.A."/>
            <person name="Sims S.K."/>
            <person name="Edwards C.A."/>
            <person name="Ashurst J.L."/>
            <person name="Wilming L."/>
            <person name="Jones M.C."/>
            <person name="Horton R."/>
            <person name="Hunt S.E."/>
            <person name="Scott C.E."/>
            <person name="Gilbert J.G.R."/>
            <person name="Clamp M.E."/>
            <person name="Bethel G."/>
            <person name="Milne S."/>
            <person name="Ainscough R."/>
            <person name="Almeida J.P."/>
            <person name="Ambrose K.D."/>
            <person name="Andrews T.D."/>
            <person name="Ashwell R.I.S."/>
            <person name="Babbage A.K."/>
            <person name="Bagguley C.L."/>
            <person name="Bailey J."/>
            <person name="Banerjee R."/>
            <person name="Barker D.J."/>
            <person name="Barlow K.F."/>
            <person name="Bates K."/>
            <person name="Beare D.M."/>
            <person name="Beasley H."/>
            <person name="Beasley O."/>
            <person name="Bird C.P."/>
            <person name="Blakey S.E."/>
            <person name="Bray-Allen S."/>
            <person name="Brook J."/>
            <person name="Brown A.J."/>
            <person name="Brown J.Y."/>
            <person name="Burford D.C."/>
            <person name="Burrill W."/>
            <person name="Burton J."/>
            <person name="Carder C."/>
            <person name="Carter N.P."/>
            <person name="Chapman J.C."/>
            <person name="Clark S.Y."/>
            <person name="Clark G."/>
            <person name="Clee C.M."/>
            <person name="Clegg S."/>
            <person name="Cobley V."/>
            <person name="Collier R.E."/>
            <person name="Collins J.E."/>
            <person name="Colman L.K."/>
            <person name="Corby N.R."/>
            <person name="Coville G.J."/>
            <person name="Culley K.M."/>
            <person name="Dhami P."/>
            <person name="Davies J."/>
            <person name="Dunn M."/>
            <person name="Earthrowl M.E."/>
            <person name="Ellington A.E."/>
            <person name="Evans K.A."/>
            <person name="Faulkner L."/>
            <person name="Francis M.D."/>
            <person name="Frankish A."/>
            <person name="Frankland J."/>
            <person name="French L."/>
            <person name="Garner P."/>
            <person name="Garnett J."/>
            <person name="Ghori M.J."/>
            <person name="Gilby L.M."/>
            <person name="Gillson C.J."/>
            <person name="Glithero R.J."/>
            <person name="Grafham D.V."/>
            <person name="Grant M."/>
            <person name="Gribble S."/>
            <person name="Griffiths C."/>
            <person name="Griffiths M.N.D."/>
            <person name="Hall R."/>
            <person name="Halls K.S."/>
            <person name="Hammond S."/>
            <person name="Harley J.L."/>
            <person name="Hart E.A."/>
            <person name="Heath P.D."/>
            <person name="Heathcott R."/>
            <person name="Holmes S.J."/>
            <person name="Howden P.J."/>
            <person name="Howe K.L."/>
            <person name="Howell G.R."/>
            <person name="Huckle E."/>
            <person name="Humphray S.J."/>
            <person name="Humphries M.D."/>
            <person name="Hunt A.R."/>
            <person name="Johnson C.M."/>
            <person name="Joy A.A."/>
            <person name="Kay M."/>
            <person name="Keenan S.J."/>
            <person name="Kimberley A.M."/>
            <person name="King A."/>
            <person name="Laird G.K."/>
            <person name="Langford C."/>
            <person name="Lawlor S."/>
            <person name="Leongamornlert D.A."/>
            <person name="Leversha M."/>
            <person name="Lloyd C.R."/>
            <person name="Lloyd D.M."/>
            <person name="Loveland J.E."/>
            <person name="Lovell J."/>
            <person name="Martin S."/>
            <person name="Mashreghi-Mohammadi M."/>
            <person name="Maslen G.L."/>
            <person name="Matthews L."/>
            <person name="McCann O.T."/>
            <person name="McLaren S.J."/>
            <person name="McLay K."/>
            <person name="McMurray A."/>
            <person name="Moore M.J.F."/>
            <person name="Mullikin J.C."/>
            <person name="Niblett D."/>
            <person name="Nickerson T."/>
            <person name="Novik K.L."/>
            <person name="Oliver K."/>
            <person name="Overton-Larty E.K."/>
            <person name="Parker A."/>
            <person name="Patel R."/>
            <person name="Pearce A.V."/>
            <person name="Peck A.I."/>
            <person name="Phillimore B.J.C.T."/>
            <person name="Phillips S."/>
            <person name="Plumb R.W."/>
            <person name="Porter K.M."/>
            <person name="Ramsey Y."/>
            <person name="Ranby S.A."/>
            <person name="Rice C.M."/>
            <person name="Ross M.T."/>
            <person name="Searle S.M."/>
            <person name="Sehra H.K."/>
            <person name="Sheridan E."/>
            <person name="Skuce C.D."/>
            <person name="Smith S."/>
            <person name="Smith M."/>
            <person name="Spraggon L."/>
            <person name="Squares S.L."/>
            <person name="Steward C.A."/>
            <person name="Sycamore N."/>
            <person name="Tamlyn-Hall G."/>
            <person name="Tester J."/>
            <person name="Theaker A.J."/>
            <person name="Thomas D.W."/>
            <person name="Thorpe A."/>
            <person name="Tracey A."/>
            <person name="Tromans A."/>
            <person name="Tubby B."/>
            <person name="Wall M."/>
            <person name="Wallis J.M."/>
            <person name="West A.P."/>
            <person name="White S.S."/>
            <person name="Whitehead S.L."/>
            <person name="Whittaker H."/>
            <person name="Wild A."/>
            <person name="Willey D.J."/>
            <person name="Wilmer T.E."/>
            <person name="Wood J.M."/>
            <person name="Wray P.W."/>
            <person name="Wyatt J.C."/>
            <person name="Young L."/>
            <person name="Younger R.M."/>
            <person name="Bentley D.R."/>
            <person name="Coulson A."/>
            <person name="Durbin R.M."/>
            <person name="Hubbard T."/>
            <person name="Sulston J.E."/>
            <person name="Dunham I."/>
            <person name="Rogers J."/>
            <person name="Beck S."/>
        </authorList>
    </citation>
    <scope>NUCLEOTIDE SEQUENCE [LARGE SCALE GENOMIC DNA]</scope>
</reference>
<reference key="3">
    <citation type="submission" date="2005-09" db="EMBL/GenBank/DDBJ databases">
        <authorList>
            <person name="Mural R.J."/>
            <person name="Istrail S."/>
            <person name="Sutton G.G."/>
            <person name="Florea L."/>
            <person name="Halpern A.L."/>
            <person name="Mobarry C.M."/>
            <person name="Lippert R."/>
            <person name="Walenz B."/>
            <person name="Shatkay H."/>
            <person name="Dew I."/>
            <person name="Miller J.R."/>
            <person name="Flanigan M.J."/>
            <person name="Edwards N.J."/>
            <person name="Bolanos R."/>
            <person name="Fasulo D."/>
            <person name="Halldorsson B.V."/>
            <person name="Hannenhalli S."/>
            <person name="Turner R."/>
            <person name="Yooseph S."/>
            <person name="Lu F."/>
            <person name="Nusskern D.R."/>
            <person name="Shue B.C."/>
            <person name="Zheng X.H."/>
            <person name="Zhong F."/>
            <person name="Delcher A.L."/>
            <person name="Huson D.H."/>
            <person name="Kravitz S.A."/>
            <person name="Mouchard L."/>
            <person name="Reinert K."/>
            <person name="Remington K.A."/>
            <person name="Clark A.G."/>
            <person name="Waterman M.S."/>
            <person name="Eichler E.E."/>
            <person name="Adams M.D."/>
            <person name="Hunkapiller M.W."/>
            <person name="Myers E.W."/>
            <person name="Venter J.C."/>
        </authorList>
    </citation>
    <scope>NUCLEOTIDE SEQUENCE [LARGE SCALE GENOMIC DNA]</scope>
</reference>
<reference key="4">
    <citation type="journal article" date="2004" name="Genome Res.">
        <title>The status, quality, and expansion of the NIH full-length cDNA project: the Mammalian Gene Collection (MGC).</title>
        <authorList>
            <consortium name="The MGC Project Team"/>
        </authorList>
    </citation>
    <scope>NUCLEOTIDE SEQUENCE [LARGE SCALE MRNA] (ISOFORM 2)</scope>
    <scope>VARIANT LYS-94</scope>
    <source>
        <tissue>Brain</tissue>
    </source>
</reference>
<reference key="5">
    <citation type="journal article" date="2012" name="N. Engl. J. Med.">
        <title>Diagnostic exome sequencing in persons with severe intellectual disability.</title>
        <authorList>
            <person name="de Ligt J."/>
            <person name="Willemsen M.H."/>
            <person name="van Bon B.W."/>
            <person name="Kleefstra T."/>
            <person name="Yntema H.G."/>
            <person name="Kroes T."/>
            <person name="Vulto-van Silfhout A.T."/>
            <person name="Koolen D.A."/>
            <person name="de Vries P."/>
            <person name="Gilissen C."/>
            <person name="del Rosario M."/>
            <person name="Hoischen A."/>
            <person name="Scheffer H."/>
            <person name="de Vries B.B."/>
            <person name="Brunner H.G."/>
            <person name="Veltman J.A."/>
            <person name="Vissers L.E."/>
        </authorList>
    </citation>
    <scope>VARIANT ASN-181</scope>
</reference>
<comment type="interaction">
    <interactant intactId="EBI-748741">
        <id>Q8N6K7</id>
    </interactant>
    <interactant intactId="EBI-9641546">
        <id>Q99996-2</id>
        <label>AKAP9</label>
    </interactant>
    <organismsDiffer>false</organismsDiffer>
    <experiments>3</experiments>
</comment>
<comment type="interaction">
    <interactant intactId="EBI-748741">
        <id>Q8N6K7</id>
    </interactant>
    <interactant intactId="EBI-749051">
        <id>Q8IYR0</id>
        <label>CFAP206</label>
    </interactant>
    <organismsDiffer>false</organismsDiffer>
    <experiments>3</experiments>
</comment>
<comment type="interaction">
    <interactant intactId="EBI-748741">
        <id>Q8N6K7</id>
    </interactant>
    <interactant intactId="EBI-352528">
        <id>P10809</id>
        <label>HSPD1</label>
    </interactant>
    <organismsDiffer>false</organismsDiffer>
    <experiments>4</experiments>
</comment>
<comment type="interaction">
    <interactant intactId="EBI-748741">
        <id>Q8N6K7</id>
    </interactant>
    <interactant intactId="EBI-710124">
        <id>O60341</id>
        <label>KDM1A</label>
    </interactant>
    <organismsDiffer>false</organismsDiffer>
    <experiments>2</experiments>
</comment>
<comment type="interaction">
    <interactant intactId="EBI-748741">
        <id>Q8N6K7</id>
    </interactant>
    <interactant intactId="EBI-742259">
        <id>Q8TAP4</id>
        <label>LMO3</label>
    </interactant>
    <organismsDiffer>false</organismsDiffer>
    <experiments>3</experiments>
</comment>
<comment type="interaction">
    <interactant intactId="EBI-11528848">
        <id>Q8N6K7-2</id>
    </interactant>
    <interactant intactId="EBI-930964">
        <id>P54253</id>
        <label>ATXN1</label>
    </interactant>
    <organismsDiffer>false</organismsDiffer>
    <experiments>3</experiments>
</comment>
<comment type="interaction">
    <interactant intactId="EBI-11528848">
        <id>Q8N6K7-2</id>
    </interactant>
    <interactant intactId="EBI-702390">
        <id>Q9UBB4</id>
        <label>ATXN10</label>
    </interactant>
    <organismsDiffer>false</organismsDiffer>
    <experiments>3</experiments>
</comment>
<comment type="interaction">
    <interactant intactId="EBI-11528848">
        <id>Q8N6K7-2</id>
    </interactant>
    <interactant intactId="EBI-8589586">
        <id>P09172</id>
        <label>DBH</label>
    </interactant>
    <organismsDiffer>false</organismsDiffer>
    <experiments>3</experiments>
</comment>
<comment type="interaction">
    <interactant intactId="EBI-11528848">
        <id>Q8N6K7-2</id>
    </interactant>
    <interactant intactId="EBI-10976677">
        <id>G5E9A7</id>
        <label>DMWD</label>
    </interactant>
    <organismsDiffer>false</organismsDiffer>
    <experiments>3</experiments>
</comment>
<comment type="interaction">
    <interactant intactId="EBI-11528848">
        <id>Q8N6K7-2</id>
    </interactant>
    <interactant intactId="EBI-949340">
        <id>Q16595</id>
        <label>FXN</label>
    </interactant>
    <organismsDiffer>false</organismsDiffer>
    <experiments>3</experiments>
</comment>
<comment type="interaction">
    <interactant intactId="EBI-11528848">
        <id>Q8N6K7-2</id>
    </interactant>
    <interactant intactId="EBI-744302">
        <id>P14136</id>
        <label>GFAP</label>
    </interactant>
    <organismsDiffer>false</organismsDiffer>
    <experiments>3</experiments>
</comment>
<comment type="interaction">
    <interactant intactId="EBI-11528848">
        <id>Q8N6K7-2</id>
    </interactant>
    <interactant intactId="EBI-352682">
        <id>P04792</id>
        <label>HSPB1</label>
    </interactant>
    <organismsDiffer>false</organismsDiffer>
    <experiments>3</experiments>
</comment>
<comment type="interaction">
    <interactant intactId="EBI-11528848">
        <id>Q8N6K7-2</id>
    </interactant>
    <interactant intactId="EBI-517086">
        <id>O43464</id>
        <label>HTRA2</label>
    </interactant>
    <organismsDiffer>false</organismsDiffer>
    <experiments>3</experiments>
</comment>
<comment type="interaction">
    <interactant intactId="EBI-11528848">
        <id>Q8N6K7-2</id>
    </interactant>
    <interactant intactId="EBI-466029">
        <id>P42858</id>
        <label>HTT</label>
    </interactant>
    <organismsDiffer>false</organismsDiffer>
    <experiments>3</experiments>
</comment>
<comment type="interaction">
    <interactant intactId="EBI-11528848">
        <id>Q8N6K7-2</id>
    </interactant>
    <interactant intactId="EBI-1055254">
        <id>Q8WXH2</id>
        <label>JPH3</label>
    </interactant>
    <organismsDiffer>false</organismsDiffer>
    <experiments>3</experiments>
</comment>
<comment type="interaction">
    <interactant intactId="EBI-11528848">
        <id>Q8N6K7-2</id>
    </interactant>
    <interactant intactId="EBI-10975473">
        <id>O60333-2</id>
        <label>KIF1B</label>
    </interactant>
    <organismsDiffer>false</organismsDiffer>
    <experiments>3</experiments>
</comment>
<comment type="interaction">
    <interactant intactId="EBI-11528848">
        <id>Q8N6K7-2</id>
    </interactant>
    <interactant intactId="EBI-725647">
        <id>Q99732</id>
        <label>LITAF</label>
    </interactant>
    <organismsDiffer>false</organismsDiffer>
    <experiments>3</experiments>
</comment>
<comment type="interaction">
    <interactant intactId="EBI-11528848">
        <id>Q8N6K7-2</id>
    </interactant>
    <interactant intactId="EBI-713665">
        <id>P19404</id>
        <label>NDUFV2</label>
    </interactant>
    <organismsDiffer>false</organismsDiffer>
    <experiments>3</experiments>
</comment>
<comment type="interaction">
    <interactant intactId="EBI-11528848">
        <id>Q8N6K7-2</id>
    </interactant>
    <interactant intactId="EBI-1391623">
        <id>P29474</id>
        <label>NOS3</label>
    </interactant>
    <organismsDiffer>false</organismsDiffer>
    <experiments>3</experiments>
</comment>
<comment type="interaction">
    <interactant intactId="EBI-11528848">
        <id>Q8N6K7-2</id>
    </interactant>
    <interactant intactId="EBI-949799">
        <id>P05129</id>
        <label>PRKCG</label>
    </interactant>
    <organismsDiffer>false</organismsDiffer>
    <experiments>3</experiments>
</comment>
<comment type="interaction">
    <interactant intactId="EBI-11528848">
        <id>Q8N6K7-2</id>
    </interactant>
    <interactant intactId="EBI-977302">
        <id>P04156</id>
        <label>PRNP</label>
    </interactant>
    <organismsDiffer>false</organismsDiffer>
    <experiments>3</experiments>
</comment>
<comment type="interaction">
    <interactant intactId="EBI-11528848">
        <id>Q8N6K7-2</id>
    </interactant>
    <interactant intactId="EBI-752074">
        <id>P41219</id>
        <label>PRPH</label>
    </interactant>
    <organismsDiffer>false</organismsDiffer>
    <experiments>3</experiments>
</comment>
<comment type="interaction">
    <interactant intactId="EBI-11528848">
        <id>Q8N6K7-2</id>
    </interactant>
    <interactant intactId="EBI-749195">
        <id>P60891</id>
        <label>PRPS1</label>
    </interactant>
    <organismsDiffer>false</organismsDiffer>
    <experiments>3</experiments>
</comment>
<comment type="interaction">
    <interactant intactId="EBI-11528848">
        <id>Q8N6K7-2</id>
    </interactant>
    <interactant intactId="EBI-1220123">
        <id>Q7Z333</id>
        <label>SETX</label>
    </interactant>
    <organismsDiffer>false</organismsDiffer>
    <experiments>3</experiments>
</comment>
<comment type="interaction">
    <interactant intactId="EBI-11528848">
        <id>Q8N6K7-2</id>
    </interactant>
    <interactant intactId="EBI-5235340">
        <id>Q7Z699</id>
        <label>SPRED1</label>
    </interactant>
    <organismsDiffer>false</organismsDiffer>
    <experiments>3</experiments>
</comment>
<comment type="interaction">
    <interactant intactId="EBI-11528848">
        <id>Q8N6K7-2</id>
    </interactant>
    <interactant intactId="EBI-720609">
        <id>O76024</id>
        <label>WFS1</label>
    </interactant>
    <organismsDiffer>false</organismsDiffer>
    <experiments>3</experiments>
</comment>
<comment type="alternative products">
    <event type="alternative splicing"/>
    <isoform>
        <id>Q8N6K7-1</id>
        <name>1</name>
        <sequence type="displayed"/>
    </isoform>
    <isoform>
        <id>Q8N6K7-2</id>
        <name>2</name>
        <sequence type="described" ref="VSP_023459 VSP_023460"/>
    </isoform>
    <isoform>
        <id>Q8N6K7-3</id>
        <name>3</name>
        <sequence type="described" ref="VSP_055738"/>
    </isoform>
</comment>
<protein>
    <recommendedName>
        <fullName>Sterile alpha motif domain-containing protein 3</fullName>
        <shortName>SAM domain-containing protein 3</shortName>
    </recommendedName>
</protein>
<sequence>METWSVEQVCSWLVEKNLGELVHRFQEEEVSGAALLALNDRMVQQLVKKIGHQAVLMDLIKKYKQNTQGLKSPENPKKAALVMQTEAARDYRDEESSSPARHGEQMPSFYPAENLDNGLIDQRVLKQRRNVKQILARSKALQWTKSYVLPEFPYDVKCMLAEQKCPDHSMRIRIIEFLQADMTKYLEGSLYPSTQQYNDVVNALLQAHPFLDEDGCGFFLWKRALKDRFKYVRRPIEDDEQVIRNKCKFGHRRGQTRKSLADIRFDEIKLVQIKEEAVCFDSELDEHIKWFQQEYVKTEKDWREIDKRMSQTLEIRRKMIGSRTPLKDILKLFPFLKCPYQMFREFQLLTRTDIYKKTRHILESYSENILTSFSVVDNPINIVLQEKMKHYTDEDMLKYMKMTATCLLLPDVFGDDPSLFVIMNEQVQVSTPVLEVKNPFNMEVCEFSLYLERERLTKVDDCVTALAALVAAFHVFRIECPRRLSQTFNFLETLIFDMHSPYFPSLKEKENEVGFQHPLT</sequence>
<evidence type="ECO:0000255" key="1">
    <source>
        <dbReference type="PROSITE-ProRule" id="PRU00184"/>
    </source>
</evidence>
<evidence type="ECO:0000256" key="2">
    <source>
        <dbReference type="SAM" id="MobiDB-lite"/>
    </source>
</evidence>
<evidence type="ECO:0000269" key="3">
    <source>
    </source>
</evidence>
<evidence type="ECO:0000269" key="4">
    <source>
    </source>
</evidence>
<evidence type="ECO:0000303" key="5">
    <source>
    </source>
</evidence>
<evidence type="ECO:0000303" key="6">
    <source>
    </source>
</evidence>
<evidence type="ECO:0000305" key="7"/>
<keyword id="KW-0025">Alternative splicing</keyword>
<keyword id="KW-1267">Proteomics identification</keyword>
<keyword id="KW-1185">Reference proteome</keyword>
<gene>
    <name type="primary">SAMD3</name>
</gene>
<dbReference type="EMBL" id="AK091351">
    <property type="protein sequence ID" value="BAC03644.1"/>
    <property type="molecule type" value="mRNA"/>
</dbReference>
<dbReference type="EMBL" id="AK091882">
    <property type="protein sequence ID" value="BAC03765.1"/>
    <property type="molecule type" value="mRNA"/>
</dbReference>
<dbReference type="EMBL" id="AK302228">
    <property type="protein sequence ID" value="BAG63582.1"/>
    <property type="molecule type" value="mRNA"/>
</dbReference>
<dbReference type="EMBL" id="AL355581">
    <property type="status" value="NOT_ANNOTATED_CDS"/>
    <property type="molecule type" value="Genomic_DNA"/>
</dbReference>
<dbReference type="EMBL" id="AL121947">
    <property type="status" value="NOT_ANNOTATED_CDS"/>
    <property type="molecule type" value="Genomic_DNA"/>
</dbReference>
<dbReference type="EMBL" id="CH471051">
    <property type="protein sequence ID" value="EAW48069.1"/>
    <property type="molecule type" value="Genomic_DNA"/>
</dbReference>
<dbReference type="EMBL" id="CH471051">
    <property type="protein sequence ID" value="EAW48070.1"/>
    <property type="molecule type" value="Genomic_DNA"/>
</dbReference>
<dbReference type="EMBL" id="BC029851">
    <property type="protein sequence ID" value="AAH29851.1"/>
    <property type="molecule type" value="mRNA"/>
</dbReference>
<dbReference type="EMBL" id="BC119757">
    <property type="protein sequence ID" value="AAI19758.1"/>
    <property type="molecule type" value="mRNA"/>
</dbReference>
<dbReference type="EMBL" id="BC119758">
    <property type="protein sequence ID" value="AAI19759.1"/>
    <property type="molecule type" value="mRNA"/>
</dbReference>
<dbReference type="CCDS" id="CCDS34539.1">
    <molecule id="Q8N6K7-1"/>
</dbReference>
<dbReference type="CCDS" id="CCDS64525.1">
    <molecule id="Q8N6K7-3"/>
</dbReference>
<dbReference type="RefSeq" id="NP_001017373.2">
    <molecule id="Q8N6K7-1"/>
    <property type="nucleotide sequence ID" value="NM_001017373.4"/>
</dbReference>
<dbReference type="RefSeq" id="NP_001245204.1">
    <molecule id="Q8N6K7-1"/>
    <property type="nucleotide sequence ID" value="NM_001258275.3"/>
</dbReference>
<dbReference type="RefSeq" id="NP_001264114.1">
    <molecule id="Q8N6K7-3"/>
    <property type="nucleotide sequence ID" value="NM_001277185.2"/>
</dbReference>
<dbReference type="RefSeq" id="XP_016865795.1">
    <property type="nucleotide sequence ID" value="XM_017010306.1"/>
</dbReference>
<dbReference type="RefSeq" id="XP_024302103.1">
    <molecule id="Q8N6K7-1"/>
    <property type="nucleotide sequence ID" value="XM_024446335.2"/>
</dbReference>
<dbReference type="RefSeq" id="XP_024302105.1">
    <molecule id="Q8N6K7-1"/>
    <property type="nucleotide sequence ID" value="XM_024446337.2"/>
</dbReference>
<dbReference type="RefSeq" id="XP_047274195.1">
    <molecule id="Q8N6K7-1"/>
    <property type="nucleotide sequence ID" value="XM_047418239.1"/>
</dbReference>
<dbReference type="RefSeq" id="XP_054210322.1">
    <molecule id="Q8N6K7-1"/>
    <property type="nucleotide sequence ID" value="XM_054354347.1"/>
</dbReference>
<dbReference type="SMR" id="Q8N6K7"/>
<dbReference type="BioGRID" id="127533">
    <property type="interactions" value="19"/>
</dbReference>
<dbReference type="FunCoup" id="Q8N6K7">
    <property type="interactions" value="55"/>
</dbReference>
<dbReference type="IntAct" id="Q8N6K7">
    <property type="interactions" value="35"/>
</dbReference>
<dbReference type="MINT" id="Q8N6K7"/>
<dbReference type="STRING" id="9606.ENSP00000402092"/>
<dbReference type="iPTMnet" id="Q8N6K7"/>
<dbReference type="PhosphoSitePlus" id="Q8N6K7"/>
<dbReference type="BioMuta" id="SAMD3"/>
<dbReference type="DMDM" id="147668009"/>
<dbReference type="MassIVE" id="Q8N6K7"/>
<dbReference type="PaxDb" id="9606-ENSP00000402092"/>
<dbReference type="PeptideAtlas" id="Q8N6K7"/>
<dbReference type="ProteomicsDB" id="72185">
    <molecule id="Q8N6K7-1"/>
</dbReference>
<dbReference type="ProteomicsDB" id="72186">
    <molecule id="Q8N6K7-2"/>
</dbReference>
<dbReference type="Antibodypedia" id="32851">
    <property type="antibodies" value="106 antibodies from 20 providers"/>
</dbReference>
<dbReference type="DNASU" id="154075"/>
<dbReference type="Ensembl" id="ENST00000324172.10">
    <molecule id="Q8N6K7-2"/>
    <property type="protein sequence ID" value="ENSP00000324874.6"/>
    <property type="gene ID" value="ENSG00000164483.17"/>
</dbReference>
<dbReference type="Ensembl" id="ENST00000368134.6">
    <molecule id="Q8N6K7-1"/>
    <property type="protein sequence ID" value="ENSP00000357116.2"/>
    <property type="gene ID" value="ENSG00000164483.17"/>
</dbReference>
<dbReference type="Ensembl" id="ENST00000437477.6">
    <molecule id="Q8N6K7-1"/>
    <property type="protein sequence ID" value="ENSP00000391163.2"/>
    <property type="gene ID" value="ENSG00000164483.17"/>
</dbReference>
<dbReference type="Ensembl" id="ENST00000439090.7">
    <molecule id="Q8N6K7-1"/>
    <property type="protein sequence ID" value="ENSP00000403565.2"/>
    <property type="gene ID" value="ENSG00000164483.17"/>
</dbReference>
<dbReference type="Ensembl" id="ENST00000457563.6">
    <molecule id="Q8N6K7-3"/>
    <property type="protein sequence ID" value="ENSP00000402092.2"/>
    <property type="gene ID" value="ENSG00000164483.17"/>
</dbReference>
<dbReference type="GeneID" id="154075"/>
<dbReference type="KEGG" id="hsa:154075"/>
<dbReference type="MANE-Select" id="ENST00000439090.7">
    <property type="protein sequence ID" value="ENSP00000403565.2"/>
    <property type="RefSeq nucleotide sequence ID" value="NM_001017373.4"/>
    <property type="RefSeq protein sequence ID" value="NP_001017373.2"/>
</dbReference>
<dbReference type="UCSC" id="uc003qbw.5">
    <molecule id="Q8N6K7-1"/>
    <property type="organism name" value="human"/>
</dbReference>
<dbReference type="AGR" id="HGNC:21574"/>
<dbReference type="CTD" id="154075"/>
<dbReference type="DisGeNET" id="154075"/>
<dbReference type="GeneCards" id="SAMD3"/>
<dbReference type="HGNC" id="HGNC:21574">
    <property type="gene designation" value="SAMD3"/>
</dbReference>
<dbReference type="HPA" id="ENSG00000164483">
    <property type="expression patterns" value="Tissue enhanced (lymphoid)"/>
</dbReference>
<dbReference type="MIM" id="620516">
    <property type="type" value="gene"/>
</dbReference>
<dbReference type="neXtProt" id="NX_Q8N6K7"/>
<dbReference type="OpenTargets" id="ENSG00000164483"/>
<dbReference type="PharmGKB" id="PA134880481"/>
<dbReference type="VEuPathDB" id="HostDB:ENSG00000164483"/>
<dbReference type="eggNOG" id="KOG1945">
    <property type="taxonomic scope" value="Eukaryota"/>
</dbReference>
<dbReference type="GeneTree" id="ENSGT00390000012396"/>
<dbReference type="HOGENOM" id="CLU_040548_0_0_1"/>
<dbReference type="InParanoid" id="Q8N6K7"/>
<dbReference type="OMA" id="VFGIQCP"/>
<dbReference type="OrthoDB" id="8999651at2759"/>
<dbReference type="PAN-GO" id="Q8N6K7">
    <property type="GO annotations" value="0 GO annotations based on evolutionary models"/>
</dbReference>
<dbReference type="PhylomeDB" id="Q8N6K7"/>
<dbReference type="TreeFam" id="TF336040"/>
<dbReference type="PathwayCommons" id="Q8N6K7"/>
<dbReference type="SignaLink" id="Q8N6K7"/>
<dbReference type="BioGRID-ORCS" id="154075">
    <property type="hits" value="9 hits in 1140 CRISPR screens"/>
</dbReference>
<dbReference type="ChiTaRS" id="SAMD3">
    <property type="organism name" value="human"/>
</dbReference>
<dbReference type="GenomeRNAi" id="154075"/>
<dbReference type="Pharos" id="Q8N6K7">
    <property type="development level" value="Tbio"/>
</dbReference>
<dbReference type="PRO" id="PR:Q8N6K7"/>
<dbReference type="Proteomes" id="UP000005640">
    <property type="component" value="Chromosome 6"/>
</dbReference>
<dbReference type="RNAct" id="Q8N6K7">
    <property type="molecule type" value="protein"/>
</dbReference>
<dbReference type="Bgee" id="ENSG00000164483">
    <property type="expression patterns" value="Expressed in granulocyte and 98 other cell types or tissues"/>
</dbReference>
<dbReference type="ExpressionAtlas" id="Q8N6K7">
    <property type="expression patterns" value="baseline and differential"/>
</dbReference>
<dbReference type="CDD" id="cd09526">
    <property type="entry name" value="SAM_Samd3"/>
    <property type="match status" value="1"/>
</dbReference>
<dbReference type="Gene3D" id="1.10.150.50">
    <property type="entry name" value="Transcription Factor, Ets-1"/>
    <property type="match status" value="1"/>
</dbReference>
<dbReference type="InterPro" id="IPR001660">
    <property type="entry name" value="SAM"/>
</dbReference>
<dbReference type="InterPro" id="IPR013761">
    <property type="entry name" value="SAM/pointed_sf"/>
</dbReference>
<dbReference type="InterPro" id="IPR042812">
    <property type="entry name" value="SAMD3"/>
</dbReference>
<dbReference type="InterPro" id="IPR042813">
    <property type="entry name" value="SAMD3_SAM"/>
</dbReference>
<dbReference type="PANTHER" id="PTHR47302">
    <property type="entry name" value="STERILE ALPHA MOTIF DOMAIN-CONTAINING PROTEIN 3"/>
    <property type="match status" value="1"/>
</dbReference>
<dbReference type="PANTHER" id="PTHR47302:SF1">
    <property type="entry name" value="STERILE ALPHA MOTIF DOMAIN-CONTAINING PROTEIN 3"/>
    <property type="match status" value="1"/>
</dbReference>
<dbReference type="Pfam" id="PF00536">
    <property type="entry name" value="SAM_1"/>
    <property type="match status" value="1"/>
</dbReference>
<dbReference type="SMART" id="SM00454">
    <property type="entry name" value="SAM"/>
    <property type="match status" value="1"/>
</dbReference>
<dbReference type="SUPFAM" id="SSF47769">
    <property type="entry name" value="SAM/Pointed domain"/>
    <property type="match status" value="1"/>
</dbReference>
<dbReference type="PROSITE" id="PS50105">
    <property type="entry name" value="SAM_DOMAIN"/>
    <property type="match status" value="1"/>
</dbReference>
<feature type="chain" id="PRO_0000279496" description="Sterile alpha motif domain-containing protein 3">
    <location>
        <begin position="1"/>
        <end position="520"/>
    </location>
</feature>
<feature type="domain" description="SAM" evidence="1">
    <location>
        <begin position="4"/>
        <end position="71"/>
    </location>
</feature>
<feature type="region of interest" description="Disordered" evidence="2">
    <location>
        <begin position="85"/>
        <end position="114"/>
    </location>
</feature>
<feature type="splice variant" id="VSP_055738" description="In isoform 3." evidence="5">
    <original>M</original>
    <variation>MRSSKLQSPSPSQEKQGVYLQETAM</variation>
    <location>
        <position position="1"/>
    </location>
</feature>
<feature type="splice variant" id="VSP_023459" description="In isoform 2." evidence="6">
    <original>FLW</original>
    <variation>AGV</variation>
    <location>
        <begin position="219"/>
        <end position="221"/>
    </location>
</feature>
<feature type="splice variant" id="VSP_023460" description="In isoform 2." evidence="6">
    <location>
        <begin position="222"/>
        <end position="520"/>
    </location>
</feature>
<feature type="sequence variant" id="VAR_030910" description="In dbSNP:rs17852709." evidence="3">
    <original>E</original>
    <variation>K</variation>
    <location>
        <position position="94"/>
    </location>
</feature>
<feature type="sequence variant" id="VAR_069418" description="In dbSNP:rs150968705." evidence="4">
    <original>D</original>
    <variation>N</variation>
    <location>
        <position position="181"/>
    </location>
</feature>
<feature type="sequence conflict" description="In Ref. 1; BAG63582." evidence="7" ref="1">
    <original>E</original>
    <variation>V</variation>
    <location>
        <position position="276"/>
    </location>
</feature>
<feature type="sequence conflict" description="In Ref. 1; BAC03765." evidence="7" ref="1">
    <original>A</original>
    <variation>G</variation>
    <location>
        <position position="472"/>
    </location>
</feature>
<proteinExistence type="evidence at protein level"/>
<name>SAMD3_HUMAN</name>
<accession>Q8N6K7</accession>
<accession>B4DY20</accession>
<accession>E1P576</accession>
<accession>J3KQK4</accession>
<accession>Q4VXD8</accession>
<accession>Q8NAY1</accession>
<accession>Q8NB96</accession>
<organism>
    <name type="scientific">Homo sapiens</name>
    <name type="common">Human</name>
    <dbReference type="NCBI Taxonomy" id="9606"/>
    <lineage>
        <taxon>Eukaryota</taxon>
        <taxon>Metazoa</taxon>
        <taxon>Chordata</taxon>
        <taxon>Craniata</taxon>
        <taxon>Vertebrata</taxon>
        <taxon>Euteleostomi</taxon>
        <taxon>Mammalia</taxon>
        <taxon>Eutheria</taxon>
        <taxon>Euarchontoglires</taxon>
        <taxon>Primates</taxon>
        <taxon>Haplorrhini</taxon>
        <taxon>Catarrhini</taxon>
        <taxon>Hominidae</taxon>
        <taxon>Homo</taxon>
    </lineage>
</organism>